<comment type="function">
    <text evidence="1">Necessary for formate dehydrogenase activity.</text>
</comment>
<comment type="subcellular location">
    <subcellularLocation>
        <location evidence="1">Cytoplasm</location>
    </subcellularLocation>
</comment>
<comment type="similarity">
    <text evidence="1">Belongs to the FdhE family.</text>
</comment>
<organism>
    <name type="scientific">Salmonella gallinarum (strain 287/91 / NCTC 13346)</name>
    <dbReference type="NCBI Taxonomy" id="550538"/>
    <lineage>
        <taxon>Bacteria</taxon>
        <taxon>Pseudomonadati</taxon>
        <taxon>Pseudomonadota</taxon>
        <taxon>Gammaproteobacteria</taxon>
        <taxon>Enterobacterales</taxon>
        <taxon>Enterobacteriaceae</taxon>
        <taxon>Salmonella</taxon>
    </lineage>
</organism>
<reference key="1">
    <citation type="journal article" date="2008" name="Genome Res.">
        <title>Comparative genome analysis of Salmonella enteritidis PT4 and Salmonella gallinarum 287/91 provides insights into evolutionary and host adaptation pathways.</title>
        <authorList>
            <person name="Thomson N.R."/>
            <person name="Clayton D.J."/>
            <person name="Windhorst D."/>
            <person name="Vernikos G."/>
            <person name="Davidson S."/>
            <person name="Churcher C."/>
            <person name="Quail M.A."/>
            <person name="Stevens M."/>
            <person name="Jones M.A."/>
            <person name="Watson M."/>
            <person name="Barron A."/>
            <person name="Layton A."/>
            <person name="Pickard D."/>
            <person name="Kingsley R.A."/>
            <person name="Bignell A."/>
            <person name="Clark L."/>
            <person name="Harris B."/>
            <person name="Ormond D."/>
            <person name="Abdellah Z."/>
            <person name="Brooks K."/>
            <person name="Cherevach I."/>
            <person name="Chillingworth T."/>
            <person name="Woodward J."/>
            <person name="Norberczak H."/>
            <person name="Lord A."/>
            <person name="Arrowsmith C."/>
            <person name="Jagels K."/>
            <person name="Moule S."/>
            <person name="Mungall K."/>
            <person name="Saunders M."/>
            <person name="Whitehead S."/>
            <person name="Chabalgoity J.A."/>
            <person name="Maskell D."/>
            <person name="Humphreys T."/>
            <person name="Roberts M."/>
            <person name="Barrow P.A."/>
            <person name="Dougan G."/>
            <person name="Parkhill J."/>
        </authorList>
    </citation>
    <scope>NUCLEOTIDE SEQUENCE [LARGE SCALE GENOMIC DNA]</scope>
    <source>
        <strain>287/91 / NCTC 13346</strain>
    </source>
</reference>
<evidence type="ECO:0000255" key="1">
    <source>
        <dbReference type="HAMAP-Rule" id="MF_00611"/>
    </source>
</evidence>
<name>FDHE_SALG2</name>
<sequence length="309" mass="34719">MSIRIIPQDELGSSEKRTADMIPPLLFPRLKNVYNRRAERLRELAENNPLGDYLRFAALIAHAQEVVLYDHPLRMDLTARIKDANDQGKPPLDIHVLPRDKHWHTLLHSMIAELKPEMSGPALAVIENLEKASEQELEQMASALFASDFASVSSDKAPFIWAALSLYWAQMASLIPGKARAEYGEARQYCPVCGSMPVSSMVQIGTTQGLRYLHCNLCETEWHVVRVKCSNCEQSRDLHYWSLENEQAAVKAESCGDCGTYLKILYQEKDPKVEAVADDLASLVLDARMEQEGFARSSINPFLFPGEGE</sequence>
<proteinExistence type="inferred from homology"/>
<keyword id="KW-0963">Cytoplasm</keyword>
<feature type="chain" id="PRO_1000130369" description="Protein FdhE">
    <location>
        <begin position="1"/>
        <end position="309"/>
    </location>
</feature>
<accession>B5RFD8</accession>
<dbReference type="EMBL" id="AM933173">
    <property type="protein sequence ID" value="CAR39181.1"/>
    <property type="molecule type" value="Genomic_DNA"/>
</dbReference>
<dbReference type="RefSeq" id="WP_000027736.1">
    <property type="nucleotide sequence ID" value="NC_011274.1"/>
</dbReference>
<dbReference type="SMR" id="B5RFD8"/>
<dbReference type="KEGG" id="seg:SG3390"/>
<dbReference type="HOGENOM" id="CLU_055275_0_0_6"/>
<dbReference type="Proteomes" id="UP000008321">
    <property type="component" value="Chromosome"/>
</dbReference>
<dbReference type="GO" id="GO:0005829">
    <property type="term" value="C:cytosol"/>
    <property type="evidence" value="ECO:0007669"/>
    <property type="project" value="TreeGrafter"/>
</dbReference>
<dbReference type="GO" id="GO:0008199">
    <property type="term" value="F:ferric iron binding"/>
    <property type="evidence" value="ECO:0007669"/>
    <property type="project" value="TreeGrafter"/>
</dbReference>
<dbReference type="GO" id="GO:0051604">
    <property type="term" value="P:protein maturation"/>
    <property type="evidence" value="ECO:0007669"/>
    <property type="project" value="TreeGrafter"/>
</dbReference>
<dbReference type="CDD" id="cd16341">
    <property type="entry name" value="FdhE"/>
    <property type="match status" value="1"/>
</dbReference>
<dbReference type="FunFam" id="3.90.1670.10:FF:000001">
    <property type="entry name" value="Protein FdhE"/>
    <property type="match status" value="1"/>
</dbReference>
<dbReference type="Gene3D" id="3.90.1670.10">
    <property type="entry name" value="FdhE-like domain"/>
    <property type="match status" value="1"/>
</dbReference>
<dbReference type="HAMAP" id="MF_00611">
    <property type="entry name" value="FdeH"/>
    <property type="match status" value="1"/>
</dbReference>
<dbReference type="InterPro" id="IPR024064">
    <property type="entry name" value="FdhE-like_sf"/>
</dbReference>
<dbReference type="InterPro" id="IPR056796">
    <property type="entry name" value="FdhE_C"/>
</dbReference>
<dbReference type="InterPro" id="IPR056797">
    <property type="entry name" value="FdhE_central"/>
</dbReference>
<dbReference type="InterPro" id="IPR056774">
    <property type="entry name" value="FdhE_N"/>
</dbReference>
<dbReference type="InterPro" id="IPR006452">
    <property type="entry name" value="Formate_DH_accessory"/>
</dbReference>
<dbReference type="NCBIfam" id="TIGR01562">
    <property type="entry name" value="FdhE"/>
    <property type="match status" value="1"/>
</dbReference>
<dbReference type="NCBIfam" id="NF002925">
    <property type="entry name" value="PRK03564.1"/>
    <property type="match status" value="1"/>
</dbReference>
<dbReference type="PANTHER" id="PTHR37689">
    <property type="entry name" value="PROTEIN FDHE"/>
    <property type="match status" value="1"/>
</dbReference>
<dbReference type="PANTHER" id="PTHR37689:SF1">
    <property type="entry name" value="PROTEIN FDHE"/>
    <property type="match status" value="1"/>
</dbReference>
<dbReference type="Pfam" id="PF24860">
    <property type="entry name" value="FdhE_C"/>
    <property type="match status" value="1"/>
</dbReference>
<dbReference type="Pfam" id="PF24859">
    <property type="entry name" value="FdhE_central"/>
    <property type="match status" value="1"/>
</dbReference>
<dbReference type="Pfam" id="PF04216">
    <property type="entry name" value="FdhE_N"/>
    <property type="match status" value="1"/>
</dbReference>
<dbReference type="PIRSF" id="PIRSF018296">
    <property type="entry name" value="Format_dh_formtn"/>
    <property type="match status" value="1"/>
</dbReference>
<dbReference type="SUPFAM" id="SSF144020">
    <property type="entry name" value="FdhE-like"/>
    <property type="match status" value="1"/>
</dbReference>
<gene>
    <name evidence="1" type="primary">fdhE</name>
    <name type="ordered locus">SG3390</name>
</gene>
<protein>
    <recommendedName>
        <fullName evidence="1">Protein FdhE</fullName>
    </recommendedName>
</protein>